<sequence length="323" mass="34429">MIRSVVRGIGSALPKRVMKNTDFEGIVETSDEWIVQRTGIRERHIAGEGETTVSLGAAAARAAIENAGLQPSDIDLVLLATSTPNNTFPASAVAIQRELGITRGFAFDLQAVCSGFIYAITTADLYIRGGMARRVLVIGAETFSHILDWTDRTTCVLFGDGAGAIVLEAAEGHGLTSDRGILAANLRSDGNHKEKLYVDGGPSTTQTVGHLRMEGREVFKHAVGMITDVIEASFEATGLTAEDIDWFVPHQANKRIIDASAKKLHIAEEKVVITVDRHGNTSAASVPLALATAVADGRIKKGDLVLLEAMGGGFTWGAVLVRW</sequence>
<feature type="chain" id="PRO_0000110408" description="Beta-ketoacyl-[acyl-carrier-protein] synthase III">
    <location>
        <begin position="1"/>
        <end position="323"/>
    </location>
</feature>
<feature type="region of interest" description="ACP-binding" evidence="1">
    <location>
        <begin position="251"/>
        <end position="255"/>
    </location>
</feature>
<feature type="active site" evidence="1">
    <location>
        <position position="113"/>
    </location>
</feature>
<feature type="active site" evidence="1">
    <location>
        <position position="250"/>
    </location>
</feature>
<feature type="active site" evidence="1">
    <location>
        <position position="280"/>
    </location>
</feature>
<name>FABH_BRUSU</name>
<dbReference type="EC" id="2.3.1.180" evidence="1"/>
<dbReference type="EMBL" id="AE014291">
    <property type="protein sequence ID" value="AAN29706.1"/>
    <property type="molecule type" value="Genomic_DNA"/>
</dbReference>
<dbReference type="EMBL" id="CP002997">
    <property type="protein sequence ID" value="AEM18123.1"/>
    <property type="molecule type" value="Genomic_DNA"/>
</dbReference>
<dbReference type="RefSeq" id="WP_004690739.1">
    <property type="nucleotide sequence ID" value="NZ_KN046804.1"/>
</dbReference>
<dbReference type="SMR" id="Q8G1E0"/>
<dbReference type="KEGG" id="bms:BR0777"/>
<dbReference type="KEGG" id="bsi:BS1330_I0773"/>
<dbReference type="PATRIC" id="fig|204722.21.peg.2654"/>
<dbReference type="HOGENOM" id="CLU_039592_3_1_5"/>
<dbReference type="UniPathway" id="UPA00094"/>
<dbReference type="Proteomes" id="UP000007104">
    <property type="component" value="Chromosome I"/>
</dbReference>
<dbReference type="GO" id="GO:0005737">
    <property type="term" value="C:cytoplasm"/>
    <property type="evidence" value="ECO:0007669"/>
    <property type="project" value="UniProtKB-SubCell"/>
</dbReference>
<dbReference type="GO" id="GO:0004315">
    <property type="term" value="F:3-oxoacyl-[acyl-carrier-protein] synthase activity"/>
    <property type="evidence" value="ECO:0007669"/>
    <property type="project" value="InterPro"/>
</dbReference>
<dbReference type="GO" id="GO:0033818">
    <property type="term" value="F:beta-ketoacyl-acyl-carrier-protein synthase III activity"/>
    <property type="evidence" value="ECO:0007669"/>
    <property type="project" value="UniProtKB-UniRule"/>
</dbReference>
<dbReference type="GO" id="GO:0006633">
    <property type="term" value="P:fatty acid biosynthetic process"/>
    <property type="evidence" value="ECO:0007669"/>
    <property type="project" value="UniProtKB-UniRule"/>
</dbReference>
<dbReference type="CDD" id="cd00830">
    <property type="entry name" value="KAS_III"/>
    <property type="match status" value="1"/>
</dbReference>
<dbReference type="FunFam" id="3.40.47.10:FF:000004">
    <property type="entry name" value="3-oxoacyl-[acyl-carrier-protein] synthase 3"/>
    <property type="match status" value="1"/>
</dbReference>
<dbReference type="Gene3D" id="3.40.47.10">
    <property type="match status" value="1"/>
</dbReference>
<dbReference type="HAMAP" id="MF_01815">
    <property type="entry name" value="FabH"/>
    <property type="match status" value="1"/>
</dbReference>
<dbReference type="InterPro" id="IPR013747">
    <property type="entry name" value="ACP_syn_III_C"/>
</dbReference>
<dbReference type="InterPro" id="IPR013751">
    <property type="entry name" value="ACP_syn_III_N"/>
</dbReference>
<dbReference type="InterPro" id="IPR004655">
    <property type="entry name" value="FabH"/>
</dbReference>
<dbReference type="InterPro" id="IPR016039">
    <property type="entry name" value="Thiolase-like"/>
</dbReference>
<dbReference type="NCBIfam" id="TIGR00747">
    <property type="entry name" value="fabH"/>
    <property type="match status" value="1"/>
</dbReference>
<dbReference type="NCBIfam" id="NF006829">
    <property type="entry name" value="PRK09352.1"/>
    <property type="match status" value="1"/>
</dbReference>
<dbReference type="PANTHER" id="PTHR43091">
    <property type="entry name" value="3-OXOACYL-[ACYL-CARRIER-PROTEIN] SYNTHASE"/>
    <property type="match status" value="1"/>
</dbReference>
<dbReference type="PANTHER" id="PTHR43091:SF1">
    <property type="entry name" value="BETA-KETOACYL-[ACYL-CARRIER-PROTEIN] SYNTHASE III, CHLOROPLASTIC"/>
    <property type="match status" value="1"/>
</dbReference>
<dbReference type="Pfam" id="PF08545">
    <property type="entry name" value="ACP_syn_III"/>
    <property type="match status" value="1"/>
</dbReference>
<dbReference type="Pfam" id="PF08541">
    <property type="entry name" value="ACP_syn_III_C"/>
    <property type="match status" value="1"/>
</dbReference>
<dbReference type="SUPFAM" id="SSF53901">
    <property type="entry name" value="Thiolase-like"/>
    <property type="match status" value="1"/>
</dbReference>
<organism>
    <name type="scientific">Brucella suis biovar 1 (strain 1330)</name>
    <dbReference type="NCBI Taxonomy" id="204722"/>
    <lineage>
        <taxon>Bacteria</taxon>
        <taxon>Pseudomonadati</taxon>
        <taxon>Pseudomonadota</taxon>
        <taxon>Alphaproteobacteria</taxon>
        <taxon>Hyphomicrobiales</taxon>
        <taxon>Brucellaceae</taxon>
        <taxon>Brucella/Ochrobactrum group</taxon>
        <taxon>Brucella</taxon>
    </lineage>
</organism>
<proteinExistence type="inferred from homology"/>
<keyword id="KW-0012">Acyltransferase</keyword>
<keyword id="KW-0963">Cytoplasm</keyword>
<keyword id="KW-0275">Fatty acid biosynthesis</keyword>
<keyword id="KW-0276">Fatty acid metabolism</keyword>
<keyword id="KW-0444">Lipid biosynthesis</keyword>
<keyword id="KW-0443">Lipid metabolism</keyword>
<keyword id="KW-0511">Multifunctional enzyme</keyword>
<keyword id="KW-0808">Transferase</keyword>
<evidence type="ECO:0000255" key="1">
    <source>
        <dbReference type="HAMAP-Rule" id="MF_01815"/>
    </source>
</evidence>
<gene>
    <name evidence="1" type="primary">fabH</name>
    <name type="ordered locus">BR0777</name>
    <name type="ordered locus">BS1330_I0773</name>
</gene>
<protein>
    <recommendedName>
        <fullName evidence="1">Beta-ketoacyl-[acyl-carrier-protein] synthase III</fullName>
        <shortName evidence="1">Beta-ketoacyl-ACP synthase III</shortName>
        <shortName evidence="1">KAS III</shortName>
        <ecNumber evidence="1">2.3.1.180</ecNumber>
    </recommendedName>
    <alternativeName>
        <fullName evidence="1">3-oxoacyl-[acyl-carrier-protein] synthase 3</fullName>
    </alternativeName>
    <alternativeName>
        <fullName evidence="1">3-oxoacyl-[acyl-carrier-protein] synthase III</fullName>
    </alternativeName>
</protein>
<comment type="function">
    <text evidence="1">Catalyzes the condensation reaction of fatty acid synthesis by the addition to an acyl acceptor of two carbons from malonyl-ACP. Catalyzes the first condensation reaction which initiates fatty acid synthesis and may therefore play a role in governing the total rate of fatty acid production. Possesses both acetoacetyl-ACP synthase and acetyl transacylase activities. Its substrate specificity determines the biosynthesis of branched-chain and/or straight-chain of fatty acids.</text>
</comment>
<comment type="catalytic activity">
    <reaction evidence="1">
        <text>malonyl-[ACP] + acetyl-CoA + H(+) = 3-oxobutanoyl-[ACP] + CO2 + CoA</text>
        <dbReference type="Rhea" id="RHEA:12080"/>
        <dbReference type="Rhea" id="RHEA-COMP:9623"/>
        <dbReference type="Rhea" id="RHEA-COMP:9625"/>
        <dbReference type="ChEBI" id="CHEBI:15378"/>
        <dbReference type="ChEBI" id="CHEBI:16526"/>
        <dbReference type="ChEBI" id="CHEBI:57287"/>
        <dbReference type="ChEBI" id="CHEBI:57288"/>
        <dbReference type="ChEBI" id="CHEBI:78449"/>
        <dbReference type="ChEBI" id="CHEBI:78450"/>
        <dbReference type="EC" id="2.3.1.180"/>
    </reaction>
</comment>
<comment type="pathway">
    <text evidence="1">Lipid metabolism; fatty acid biosynthesis.</text>
</comment>
<comment type="subunit">
    <text evidence="1">Homodimer.</text>
</comment>
<comment type="subcellular location">
    <subcellularLocation>
        <location evidence="1">Cytoplasm</location>
    </subcellularLocation>
</comment>
<comment type="domain">
    <text evidence="1">The last Arg residue of the ACP-binding site is essential for the weak association between ACP/AcpP and FabH.</text>
</comment>
<comment type="similarity">
    <text evidence="1">Belongs to the thiolase-like superfamily. FabH family.</text>
</comment>
<reference key="1">
    <citation type="journal article" date="2002" name="Proc. Natl. Acad. Sci. U.S.A.">
        <title>The Brucella suis genome reveals fundamental similarities between animal and plant pathogens and symbionts.</title>
        <authorList>
            <person name="Paulsen I.T."/>
            <person name="Seshadri R."/>
            <person name="Nelson K.E."/>
            <person name="Eisen J.A."/>
            <person name="Heidelberg J.F."/>
            <person name="Read T.D."/>
            <person name="Dodson R.J."/>
            <person name="Umayam L.A."/>
            <person name="Brinkac L.M."/>
            <person name="Beanan M.J."/>
            <person name="Daugherty S.C."/>
            <person name="DeBoy R.T."/>
            <person name="Durkin A.S."/>
            <person name="Kolonay J.F."/>
            <person name="Madupu R."/>
            <person name="Nelson W.C."/>
            <person name="Ayodeji B."/>
            <person name="Kraul M."/>
            <person name="Shetty J."/>
            <person name="Malek J.A."/>
            <person name="Van Aken S.E."/>
            <person name="Riedmuller S."/>
            <person name="Tettelin H."/>
            <person name="Gill S.R."/>
            <person name="White O."/>
            <person name="Salzberg S.L."/>
            <person name="Hoover D.L."/>
            <person name="Lindler L.E."/>
            <person name="Halling S.M."/>
            <person name="Boyle S.M."/>
            <person name="Fraser C.M."/>
        </authorList>
    </citation>
    <scope>NUCLEOTIDE SEQUENCE [LARGE SCALE GENOMIC DNA]</scope>
    <source>
        <strain>1330</strain>
    </source>
</reference>
<reference key="2">
    <citation type="journal article" date="2011" name="J. Bacteriol.">
        <title>Revised genome sequence of Brucella suis 1330.</title>
        <authorList>
            <person name="Tae H."/>
            <person name="Shallom S."/>
            <person name="Settlage R."/>
            <person name="Preston D."/>
            <person name="Adams L.G."/>
            <person name="Garner H.R."/>
        </authorList>
    </citation>
    <scope>NUCLEOTIDE SEQUENCE [LARGE SCALE GENOMIC DNA]</scope>
    <source>
        <strain>1330</strain>
    </source>
</reference>
<accession>Q8G1E0</accession>
<accession>G0K8S5</accession>